<protein>
    <recommendedName>
        <fullName evidence="1">Capsid protein</fullName>
    </recommendedName>
    <alternativeName>
        <fullName evidence="1">Core antigen</fullName>
    </alternativeName>
    <alternativeName>
        <fullName evidence="1">Core protein</fullName>
    </alternativeName>
    <alternativeName>
        <fullName evidence="1">HBcAg</fullName>
    </alternativeName>
    <alternativeName>
        <fullName evidence="1">p21.5</fullName>
    </alternativeName>
</protein>
<organism>
    <name type="scientific">Hepatitis B virus genotype B1 subtype adw (isolate Japan/pJDW233/1988)</name>
    <name type="common">HBV-B</name>
    <dbReference type="NCBI Taxonomy" id="10413"/>
    <lineage>
        <taxon>Viruses</taxon>
        <taxon>Riboviria</taxon>
        <taxon>Pararnavirae</taxon>
        <taxon>Artverviricota</taxon>
        <taxon>Revtraviricetes</taxon>
        <taxon>Blubervirales</taxon>
        <taxon>Hepadnaviridae</taxon>
        <taxon>Orthohepadnavirus</taxon>
        <taxon>Hepatitis B virus</taxon>
    </lineage>
</organism>
<name>CAPSD_HBVB1</name>
<keyword id="KW-0024">Alternative initiation</keyword>
<keyword id="KW-0167">Capsid protein</keyword>
<keyword id="KW-1176">Cytoplasmic inwards viral transport</keyword>
<keyword id="KW-0238">DNA-binding</keyword>
<keyword id="KW-1035">Host cytoplasm</keyword>
<keyword id="KW-0945">Host-virus interaction</keyword>
<keyword id="KW-1177">Microtubular inwards viral transport</keyword>
<keyword id="KW-0597">Phosphoprotein</keyword>
<keyword id="KW-0677">Repeat</keyword>
<keyword id="KW-0694">RNA-binding</keyword>
<keyword id="KW-1144">T=4 icosahedral capsid protein</keyword>
<keyword id="KW-1163">Viral penetration into host nucleus</keyword>
<keyword id="KW-0946">Virion</keyword>
<keyword id="KW-1160">Virus entry into host cell</keyword>
<sequence>MDIDPYKEFGATVELLSFLPSDFFPSVRDLLDTVSALYREALKSPEHCSPHHTALRQAILCWGELMTLATWVGNNLEDPASRDLVVNYVNTNMGLKIRQLWWFHISCLTFGRETVLEYLVSFGVWIRTPPAYRPPNAPILSTLPETTVVRRRGRSPRRRTPSPRRRRSQSPRRRRSQSRESQC</sequence>
<evidence type="ECO:0000255" key="1">
    <source>
        <dbReference type="HAMAP-Rule" id="MF_04076"/>
    </source>
</evidence>
<evidence type="ECO:0000256" key="2">
    <source>
        <dbReference type="SAM" id="MobiDB-lite"/>
    </source>
</evidence>
<organismHost>
    <name type="scientific">Homo sapiens</name>
    <name type="common">Human</name>
    <dbReference type="NCBI Taxonomy" id="9606"/>
</organismHost>
<organismHost>
    <name type="scientific">Pan troglodytes</name>
    <name type="common">Chimpanzee</name>
    <dbReference type="NCBI Taxonomy" id="9598"/>
</organismHost>
<gene>
    <name evidence="1" type="primary">C</name>
</gene>
<accession>P17391</accession>
<feature type="chain" id="PRO_0000222316" description="Capsid protein">
    <location>
        <begin position="1"/>
        <end position="183"/>
    </location>
</feature>
<feature type="repeat" description="1; half-length">
    <location>
        <begin position="155"/>
        <end position="161"/>
    </location>
</feature>
<feature type="repeat" description="2">
    <location>
        <begin position="162"/>
        <end position="169"/>
    </location>
</feature>
<feature type="repeat" description="3">
    <location>
        <begin position="170"/>
        <end position="177"/>
    </location>
</feature>
<feature type="region of interest" description="Disordered" evidence="2">
    <location>
        <begin position="136"/>
        <end position="183"/>
    </location>
</feature>
<feature type="region of interest" description="3 X 8 AA repeats of S-P-R-R-R-[PR]-S-Q">
    <location>
        <begin position="155"/>
        <end position="177"/>
    </location>
</feature>
<feature type="region of interest" description="RNA binding" evidence="1">
    <location>
        <begin position="177"/>
        <end position="183"/>
    </location>
</feature>
<feature type="short sequence motif" description="Bipartite nuclear localization signal" evidence="1">
    <location>
        <begin position="158"/>
        <end position="175"/>
    </location>
</feature>
<feature type="compositionally biased region" description="Basic residues" evidence="2">
    <location>
        <begin position="149"/>
        <end position="176"/>
    </location>
</feature>
<feature type="modified residue" description="Phosphoserine; by host" evidence="1">
    <location>
        <position position="155"/>
    </location>
</feature>
<feature type="modified residue" description="Phosphoserine; by host" evidence="1">
    <location>
        <position position="162"/>
    </location>
</feature>
<feature type="modified residue" description="Phosphoserine; by host" evidence="1">
    <location>
        <position position="170"/>
    </location>
</feature>
<dbReference type="EMBL" id="D00329">
    <property type="status" value="NOT_ANNOTATED_CDS"/>
    <property type="molecule type" value="Genomic_DNA"/>
</dbReference>
<dbReference type="PIR" id="A28925">
    <property type="entry name" value="NKVLJ1"/>
</dbReference>
<dbReference type="SMR" id="P17391"/>
<dbReference type="Proteomes" id="UP000007913">
    <property type="component" value="Segment"/>
</dbReference>
<dbReference type="GO" id="GO:0043657">
    <property type="term" value="C:host cell"/>
    <property type="evidence" value="ECO:0007669"/>
    <property type="project" value="GOC"/>
</dbReference>
<dbReference type="GO" id="GO:0030430">
    <property type="term" value="C:host cell cytoplasm"/>
    <property type="evidence" value="ECO:0007669"/>
    <property type="project" value="UniProtKB-SubCell"/>
</dbReference>
<dbReference type="GO" id="GO:0039619">
    <property type="term" value="C:T=4 icosahedral viral capsid"/>
    <property type="evidence" value="ECO:0007669"/>
    <property type="project" value="UniProtKB-UniRule"/>
</dbReference>
<dbReference type="GO" id="GO:0003677">
    <property type="term" value="F:DNA binding"/>
    <property type="evidence" value="ECO:0007669"/>
    <property type="project" value="UniProtKB-UniRule"/>
</dbReference>
<dbReference type="GO" id="GO:0003723">
    <property type="term" value="F:RNA binding"/>
    <property type="evidence" value="ECO:0007669"/>
    <property type="project" value="UniProtKB-UniRule"/>
</dbReference>
<dbReference type="GO" id="GO:0005198">
    <property type="term" value="F:structural molecule activity"/>
    <property type="evidence" value="ECO:0007669"/>
    <property type="project" value="UniProtKB-UniRule"/>
</dbReference>
<dbReference type="GO" id="GO:0075521">
    <property type="term" value="P:microtubule-dependent intracellular transport of viral material towards nucleus"/>
    <property type="evidence" value="ECO:0007669"/>
    <property type="project" value="UniProtKB-UniRule"/>
</dbReference>
<dbReference type="GO" id="GO:0046718">
    <property type="term" value="P:symbiont entry into host cell"/>
    <property type="evidence" value="ECO:0007669"/>
    <property type="project" value="UniProtKB-UniRule"/>
</dbReference>
<dbReference type="GO" id="GO:0075732">
    <property type="term" value="P:viral penetration into host nucleus"/>
    <property type="evidence" value="ECO:0007669"/>
    <property type="project" value="UniProtKB-UniRule"/>
</dbReference>
<dbReference type="FunFam" id="1.10.4090.10:FF:000001">
    <property type="entry name" value="Capsid protein"/>
    <property type="match status" value="1"/>
</dbReference>
<dbReference type="Gene3D" id="1.10.4090.10">
    <property type="entry name" value="Viral capsid, core domain supefamily, Hepatitis B virus"/>
    <property type="match status" value="1"/>
</dbReference>
<dbReference type="HAMAP" id="MF_04076">
    <property type="entry name" value="HBV_HBEAG"/>
    <property type="match status" value="1"/>
</dbReference>
<dbReference type="InterPro" id="IPR002006">
    <property type="entry name" value="Hepatitis_core"/>
</dbReference>
<dbReference type="InterPro" id="IPR036459">
    <property type="entry name" value="Viral_capsid_core_dom_sf_HBV"/>
</dbReference>
<dbReference type="Pfam" id="PF00906">
    <property type="entry name" value="Hepatitis_core"/>
    <property type="match status" value="3"/>
</dbReference>
<dbReference type="SUPFAM" id="SSF47852">
    <property type="entry name" value="Hepatitis B viral capsid (hbcag)"/>
    <property type="match status" value="1"/>
</dbReference>
<comment type="function">
    <text evidence="1">Self assembles to form an icosahedral capsid. Most capsids appear to be large particles with an icosahedral symmetry of T=4 and consist of 240 copies of capsid protein, though a fraction forms smaller T=3 particles consisting of 180 capsid proteins. Entering capsids are transported along microtubules to the nucleus. Phosphorylation of the capsid is thought to induce exposure of nuclear localization signal in the C-terminal portion of the capsid protein that allows binding to the nuclear pore complex via the importin (karyopherin-) alpha and beta. Capsids are imported in intact form through the nuclear pore into the nuclear basket, where it probably binds NUP153. Only capsids that contain the mature viral genome can release the viral DNA and capsid protein into the nucleoplasm. Immature capsids get stuck in the basket. Capsids encapsulate the pre-genomic RNA and the P protein. Pre-genomic RNA is reverse-transcribed into DNA while the capsid is still in the cytoplasm. The capsid can then either be directed to the nucleus, providing more genomes for transcription, or bud through the endoplasmic reticulum to provide new virions.</text>
</comment>
<comment type="subunit">
    <text evidence="1">Homodimerizes, then multimerizes. Interacts with cytosol exposed regions of viral L glycoprotein present in the reticulum-to-Golgi compartment. Interacts with human FLNB. Phosphorylated form interacts with host importin alpha; this interaction depends on the exposure of the NLS, which itself depends upon genome maturation and/or phosphorylation of the capsid protein. Interacts with host NUP153.</text>
</comment>
<comment type="subcellular location">
    <subcellularLocation>
        <location evidence="1">Virion</location>
    </subcellularLocation>
    <subcellularLocation>
        <location evidence="1">Host cytoplasm</location>
    </subcellularLocation>
</comment>
<comment type="alternative products">
    <event type="alternative initiation"/>
    <isoform>
        <id>P17391-1</id>
        <name>Capsid protein</name>
        <sequence type="displayed"/>
    </isoform>
    <isoform>
        <id>P0C699-1</id>
        <name>External core antigen</name>
        <sequence type="external"/>
    </isoform>
</comment>
<comment type="PTM">
    <text evidence="1">Phosphorylated by host SRPK1, SRPK2, and maybe protein kinase C or GAPDH. Phosphorylation is critical for pregenomic RNA packaging. Protein kinase C phosphorylation is stimulated by HBx protein and may play a role in transport of the viral genome to the nucleus at the late step during the viral replication cycle.</text>
</comment>
<comment type="similarity">
    <text evidence="1">Belongs to the orthohepadnavirus core antigen family.</text>
</comment>
<reference key="1">
    <citation type="journal article" date="1988" name="J. Gen. Virol.">
        <title>Typing hepatitis B virus by homology in nucleotide sequence: comparison of surface antigen subtypes.</title>
        <authorList>
            <person name="Okamoto H."/>
            <person name="Tsuda F."/>
            <person name="Sakugawa H."/>
            <person name="Sastrosoewignjo R.I."/>
            <person name="Imai M."/>
            <person name="Miyakawa Y."/>
            <person name="Mayumi M."/>
        </authorList>
    </citation>
    <scope>NUCLEOTIDE SEQUENCE [GENOMIC DNA]</scope>
</reference>
<proteinExistence type="inferred from homology"/>